<reference key="1">
    <citation type="journal article" date="2005" name="Nature">
        <title>The map-based sequence of the rice genome.</title>
        <authorList>
            <consortium name="International rice genome sequencing project (IRGSP)"/>
        </authorList>
    </citation>
    <scope>NUCLEOTIDE SEQUENCE [LARGE SCALE GENOMIC DNA]</scope>
    <source>
        <strain>cv. Nipponbare</strain>
    </source>
</reference>
<reference key="2">
    <citation type="journal article" date="2008" name="Nucleic Acids Res.">
        <title>The rice annotation project database (RAP-DB): 2008 update.</title>
        <authorList>
            <consortium name="The rice annotation project (RAP)"/>
        </authorList>
    </citation>
    <scope>GENOME REANNOTATION</scope>
    <source>
        <strain>cv. Nipponbare</strain>
    </source>
</reference>
<reference key="3">
    <citation type="journal article" date="2013" name="Rice">
        <title>Improvement of the Oryza sativa Nipponbare reference genome using next generation sequence and optical map data.</title>
        <authorList>
            <person name="Kawahara Y."/>
            <person name="de la Bastide M."/>
            <person name="Hamilton J.P."/>
            <person name="Kanamori H."/>
            <person name="McCombie W.R."/>
            <person name="Ouyang S."/>
            <person name="Schwartz D.C."/>
            <person name="Tanaka T."/>
            <person name="Wu J."/>
            <person name="Zhou S."/>
            <person name="Childs K.L."/>
            <person name="Davidson R.M."/>
            <person name="Lin H."/>
            <person name="Quesada-Ocampo L."/>
            <person name="Vaillancourt B."/>
            <person name="Sakai H."/>
            <person name="Lee S.S."/>
            <person name="Kim J."/>
            <person name="Numa H."/>
            <person name="Itoh T."/>
            <person name="Buell C.R."/>
            <person name="Matsumoto T."/>
        </authorList>
    </citation>
    <scope>GENOME REANNOTATION</scope>
    <source>
        <strain>cv. Nipponbare</strain>
    </source>
</reference>
<reference key="4">
    <citation type="journal article" date="2005" name="PLoS Biol.">
        <title>The genomes of Oryza sativa: a history of duplications.</title>
        <authorList>
            <person name="Yu J."/>
            <person name="Wang J."/>
            <person name="Lin W."/>
            <person name="Li S."/>
            <person name="Li H."/>
            <person name="Zhou J."/>
            <person name="Ni P."/>
            <person name="Dong W."/>
            <person name="Hu S."/>
            <person name="Zeng C."/>
            <person name="Zhang J."/>
            <person name="Zhang Y."/>
            <person name="Li R."/>
            <person name="Xu Z."/>
            <person name="Li S."/>
            <person name="Li X."/>
            <person name="Zheng H."/>
            <person name="Cong L."/>
            <person name="Lin L."/>
            <person name="Yin J."/>
            <person name="Geng J."/>
            <person name="Li G."/>
            <person name="Shi J."/>
            <person name="Liu J."/>
            <person name="Lv H."/>
            <person name="Li J."/>
            <person name="Wang J."/>
            <person name="Deng Y."/>
            <person name="Ran L."/>
            <person name="Shi X."/>
            <person name="Wang X."/>
            <person name="Wu Q."/>
            <person name="Li C."/>
            <person name="Ren X."/>
            <person name="Wang J."/>
            <person name="Wang X."/>
            <person name="Li D."/>
            <person name="Liu D."/>
            <person name="Zhang X."/>
            <person name="Ji Z."/>
            <person name="Zhao W."/>
            <person name="Sun Y."/>
            <person name="Zhang Z."/>
            <person name="Bao J."/>
            <person name="Han Y."/>
            <person name="Dong L."/>
            <person name="Ji J."/>
            <person name="Chen P."/>
            <person name="Wu S."/>
            <person name="Liu J."/>
            <person name="Xiao Y."/>
            <person name="Bu D."/>
            <person name="Tan J."/>
            <person name="Yang L."/>
            <person name="Ye C."/>
            <person name="Zhang J."/>
            <person name="Xu J."/>
            <person name="Zhou Y."/>
            <person name="Yu Y."/>
            <person name="Zhang B."/>
            <person name="Zhuang S."/>
            <person name="Wei H."/>
            <person name="Liu B."/>
            <person name="Lei M."/>
            <person name="Yu H."/>
            <person name="Li Y."/>
            <person name="Xu H."/>
            <person name="Wei S."/>
            <person name="He X."/>
            <person name="Fang L."/>
            <person name="Zhang Z."/>
            <person name="Zhang Y."/>
            <person name="Huang X."/>
            <person name="Su Z."/>
            <person name="Tong W."/>
            <person name="Li J."/>
            <person name="Tong Z."/>
            <person name="Li S."/>
            <person name="Ye J."/>
            <person name="Wang L."/>
            <person name="Fang L."/>
            <person name="Lei T."/>
            <person name="Chen C.-S."/>
            <person name="Chen H.-C."/>
            <person name="Xu Z."/>
            <person name="Li H."/>
            <person name="Huang H."/>
            <person name="Zhang F."/>
            <person name="Xu H."/>
            <person name="Li N."/>
            <person name="Zhao C."/>
            <person name="Li S."/>
            <person name="Dong L."/>
            <person name="Huang Y."/>
            <person name="Li L."/>
            <person name="Xi Y."/>
            <person name="Qi Q."/>
            <person name="Li W."/>
            <person name="Zhang B."/>
            <person name="Hu W."/>
            <person name="Zhang Y."/>
            <person name="Tian X."/>
            <person name="Jiao Y."/>
            <person name="Liang X."/>
            <person name="Jin J."/>
            <person name="Gao L."/>
            <person name="Zheng W."/>
            <person name="Hao B."/>
            <person name="Liu S.-M."/>
            <person name="Wang W."/>
            <person name="Yuan L."/>
            <person name="Cao M."/>
            <person name="McDermott J."/>
            <person name="Samudrala R."/>
            <person name="Wang J."/>
            <person name="Wong G.K.-S."/>
            <person name="Yang H."/>
        </authorList>
    </citation>
    <scope>NUCLEOTIDE SEQUENCE [LARGE SCALE GENOMIC DNA]</scope>
    <source>
        <strain>cv. Nipponbare</strain>
    </source>
</reference>
<reference key="5">
    <citation type="journal article" date="2003" name="Science">
        <title>Collection, mapping, and annotation of over 28,000 cDNA clones from japonica rice.</title>
        <authorList>
            <consortium name="The rice full-length cDNA consortium"/>
        </authorList>
    </citation>
    <scope>NUCLEOTIDE SEQUENCE [LARGE SCALE MRNA]</scope>
    <source>
        <strain>cv. Nipponbare</strain>
    </source>
</reference>
<reference key="6">
    <citation type="journal article" date="2004" name="Trends Plant Sci.">
        <title>Plant actin-related proteins.</title>
        <authorList>
            <person name="Kandasamy M.K."/>
            <person name="Deal R.B."/>
            <person name="McKinney E.C."/>
            <person name="Meagher R.B."/>
        </authorList>
    </citation>
    <scope>REVIEW</scope>
    <scope>GENE FAMILY</scope>
    <scope>NOMENCLATURE</scope>
</reference>
<keyword id="KW-0156">Chromatin regulator</keyword>
<keyword id="KW-0963">Cytoplasm</keyword>
<keyword id="KW-0217">Developmental protein</keyword>
<keyword id="KW-0539">Nucleus</keyword>
<keyword id="KW-1185">Reference proteome</keyword>
<feature type="chain" id="PRO_0000320529" description="Actin-related protein 4">
    <location>
        <begin position="1"/>
        <end position="443"/>
    </location>
</feature>
<feature type="region of interest" description="Disordered" evidence="3">
    <location>
        <begin position="36"/>
        <end position="69"/>
    </location>
</feature>
<feature type="compositionally biased region" description="Basic and acidic residues" evidence="3">
    <location>
        <begin position="47"/>
        <end position="56"/>
    </location>
</feature>
<feature type="sequence conflict" description="In Ref. 5; AK065561." evidence="4" ref="5">
    <original>S</original>
    <variation>I</variation>
    <location>
        <position position="346"/>
    </location>
</feature>
<comment type="function">
    <text evidence="1">Involved in several developmental processes including organization of plant organs, flowering time, anther development, flower senescence and fertility, probably by regulating the chromatin structure.</text>
</comment>
<comment type="subcellular location">
    <subcellularLocation>
        <location evidence="2">Nucleus</location>
    </subcellularLocation>
    <subcellularLocation>
        <location evidence="2">Cytoplasm</location>
    </subcellularLocation>
</comment>
<comment type="similarity">
    <text evidence="4">Belongs to the actin family. ARP4 subfamily.</text>
</comment>
<sequence>MYGGDEVSAIVIDVGSYSCKAGYAGDDTPKAVFPSVVGSIEQTGETDEAKADKEAEAASDSKNGAKPMDVDKAKTKRKLYVGQELEFRRDHMEVISPMKDGTVTDWDIVDNIWNHAFRQRLLINPEEHPMLIAEPSTNTGQQREKAAELMFEKYKVPALFLAKNAVLTSFASGRATSLVVDSGGGSTVVAAVHDGYVLQKSVATSPIGGEFLTDCMMKSLESKGVVIRPRYSFKKKEVGPGEYKVVDLDLPNTTESYKLYCMRAIASDIKESVCRVPDTAFDEVAYANVPTTSYELPDGQTIEVGADRFKIPDILFNPSLSQTIPGVDGFADSMSVRGLPRMVIDSVNRCDVDIRKELLSSILLSGGSSSILQLKERLEKEVLEESSGNTRVKVLASGNSVERRFSVWIGGSILASLGSFQQMWFSKAEYEEHGVSYIQRKCP</sequence>
<organism>
    <name type="scientific">Oryza sativa subsp. japonica</name>
    <name type="common">Rice</name>
    <dbReference type="NCBI Taxonomy" id="39947"/>
    <lineage>
        <taxon>Eukaryota</taxon>
        <taxon>Viridiplantae</taxon>
        <taxon>Streptophyta</taxon>
        <taxon>Embryophyta</taxon>
        <taxon>Tracheophyta</taxon>
        <taxon>Spermatophyta</taxon>
        <taxon>Magnoliopsida</taxon>
        <taxon>Liliopsida</taxon>
        <taxon>Poales</taxon>
        <taxon>Poaceae</taxon>
        <taxon>BOP clade</taxon>
        <taxon>Oryzoideae</taxon>
        <taxon>Oryzeae</taxon>
        <taxon>Oryzinae</taxon>
        <taxon>Oryza</taxon>
        <taxon>Oryza sativa</taxon>
    </lineage>
</organism>
<accession>Q6ZJW9</accession>
<accession>A3BPG0</accession>
<accession>B7ERY7</accession>
<protein>
    <recommendedName>
        <fullName>Actin-related protein 4</fullName>
    </recommendedName>
</protein>
<proteinExistence type="evidence at transcript level"/>
<evidence type="ECO:0000250" key="1"/>
<evidence type="ECO:0000250" key="2">
    <source>
        <dbReference type="UniProtKB" id="Q84M92"/>
    </source>
</evidence>
<evidence type="ECO:0000256" key="3">
    <source>
        <dbReference type="SAM" id="MobiDB-lite"/>
    </source>
</evidence>
<evidence type="ECO:0000305" key="4"/>
<dbReference type="EMBL" id="AP003896">
    <property type="protein sequence ID" value="BAD03074.1"/>
    <property type="molecule type" value="Genomic_DNA"/>
</dbReference>
<dbReference type="EMBL" id="AP008214">
    <property type="protein sequence ID" value="BAF22868.1"/>
    <property type="molecule type" value="Genomic_DNA"/>
</dbReference>
<dbReference type="EMBL" id="AP014964">
    <property type="protein sequence ID" value="BAT03751.1"/>
    <property type="molecule type" value="Genomic_DNA"/>
</dbReference>
<dbReference type="EMBL" id="CM000145">
    <property type="status" value="NOT_ANNOTATED_CDS"/>
    <property type="molecule type" value="Genomic_DNA"/>
</dbReference>
<dbReference type="EMBL" id="AK065561">
    <property type="status" value="NOT_ANNOTATED_CDS"/>
    <property type="molecule type" value="mRNA"/>
</dbReference>
<dbReference type="EMBL" id="AK101582">
    <property type="protein sequence ID" value="BAG95134.1"/>
    <property type="molecule type" value="mRNA"/>
</dbReference>
<dbReference type="RefSeq" id="XP_015649887.1">
    <property type="nucleotide sequence ID" value="XM_015794401.1"/>
</dbReference>
<dbReference type="SMR" id="Q6ZJW9"/>
<dbReference type="FunCoup" id="Q6ZJW9">
    <property type="interactions" value="2091"/>
</dbReference>
<dbReference type="STRING" id="39947.Q6ZJW9"/>
<dbReference type="PaxDb" id="39947-Q6ZJW9"/>
<dbReference type="EnsemblPlants" id="Os08t0137200-01">
    <property type="protein sequence ID" value="Os08t0137200-01"/>
    <property type="gene ID" value="Os08g0137200"/>
</dbReference>
<dbReference type="Gramene" id="Os08t0137200-01">
    <property type="protein sequence ID" value="Os08t0137200-01"/>
    <property type="gene ID" value="Os08g0137200"/>
</dbReference>
<dbReference type="KEGG" id="dosa:Os08g0137200"/>
<dbReference type="eggNOG" id="KOG0679">
    <property type="taxonomic scope" value="Eukaryota"/>
</dbReference>
<dbReference type="HOGENOM" id="CLU_027965_6_2_1"/>
<dbReference type="InParanoid" id="Q6ZJW9"/>
<dbReference type="OMA" id="MTEAPWN"/>
<dbReference type="OrthoDB" id="5132116at2759"/>
<dbReference type="Proteomes" id="UP000000763">
    <property type="component" value="Chromosome 8"/>
</dbReference>
<dbReference type="Proteomes" id="UP000007752">
    <property type="component" value="Chromosome 8"/>
</dbReference>
<dbReference type="Proteomes" id="UP000059680">
    <property type="component" value="Chromosome 8"/>
</dbReference>
<dbReference type="GO" id="GO:0005737">
    <property type="term" value="C:cytoplasm"/>
    <property type="evidence" value="ECO:0007669"/>
    <property type="project" value="UniProtKB-SubCell"/>
</dbReference>
<dbReference type="GO" id="GO:0035267">
    <property type="term" value="C:NuA4 histone acetyltransferase complex"/>
    <property type="evidence" value="ECO:0000318"/>
    <property type="project" value="GO_Central"/>
</dbReference>
<dbReference type="GO" id="GO:0016514">
    <property type="term" value="C:SWI/SNF complex"/>
    <property type="evidence" value="ECO:0000318"/>
    <property type="project" value="GO_Central"/>
</dbReference>
<dbReference type="GO" id="GO:0003682">
    <property type="term" value="F:chromatin binding"/>
    <property type="evidence" value="ECO:0000318"/>
    <property type="project" value="GO_Central"/>
</dbReference>
<dbReference type="GO" id="GO:0006338">
    <property type="term" value="P:chromatin remodeling"/>
    <property type="evidence" value="ECO:0000318"/>
    <property type="project" value="GO_Central"/>
</dbReference>
<dbReference type="GO" id="GO:0006357">
    <property type="term" value="P:regulation of transcription by RNA polymerase II"/>
    <property type="evidence" value="ECO:0000318"/>
    <property type="project" value="GO_Central"/>
</dbReference>
<dbReference type="CDD" id="cd13395">
    <property type="entry name" value="ASKHA_NBD_Arp4_ACTL6-like"/>
    <property type="match status" value="1"/>
</dbReference>
<dbReference type="FunFam" id="3.30.420.40:FF:000151">
    <property type="entry name" value="Actin-related protein 4"/>
    <property type="match status" value="1"/>
</dbReference>
<dbReference type="FunFam" id="3.90.640.10:FF:000031">
    <property type="entry name" value="Actin-related protein 4"/>
    <property type="match status" value="1"/>
</dbReference>
<dbReference type="FunFam" id="3.30.420.40:FF:000127">
    <property type="entry name" value="actin-related protein 4"/>
    <property type="match status" value="1"/>
</dbReference>
<dbReference type="Gene3D" id="3.30.420.40">
    <property type="match status" value="3"/>
</dbReference>
<dbReference type="Gene3D" id="3.90.640.10">
    <property type="entry name" value="Actin, Chain A, domain 4"/>
    <property type="match status" value="1"/>
</dbReference>
<dbReference type="InterPro" id="IPR004000">
    <property type="entry name" value="Actin"/>
</dbReference>
<dbReference type="InterPro" id="IPR043129">
    <property type="entry name" value="ATPase_NBD"/>
</dbReference>
<dbReference type="PANTHER" id="PTHR11937">
    <property type="entry name" value="ACTIN"/>
    <property type="match status" value="1"/>
</dbReference>
<dbReference type="Pfam" id="PF00022">
    <property type="entry name" value="Actin"/>
    <property type="match status" value="1"/>
</dbReference>
<dbReference type="SMART" id="SM00268">
    <property type="entry name" value="ACTIN"/>
    <property type="match status" value="1"/>
</dbReference>
<dbReference type="SUPFAM" id="SSF53067">
    <property type="entry name" value="Actin-like ATPase domain"/>
    <property type="match status" value="2"/>
</dbReference>
<name>ARP4_ORYSJ</name>
<gene>
    <name type="primary">ARP4</name>
    <name type="ordered locus">Os08g0137200</name>
    <name type="ordered locus">LOC_Os08g04280</name>
    <name type="ORF">OJ1613_G04.21</name>
    <name type="ORF">OsJ_024932</name>
</gene>